<sequence>MDRSKRNSIAGFPPRVERLEEFEGGGGGDGNTVQVGRVSSSSYRAIISAFSRLTSLDDFTREKIGSGFFSEVFKVRHRASGQVMALKMNTLSSNRANLLKEMQLMNRLSHPNILRFMGVCVHQGQLHALTEYINSGNLEQLLDSDLYLPWTVRVKLAYDIAVGLSYLHFKGIFHRDLTSKNCLIKRDENGYSAVVADFGLAEKIPDASIGREKLAVVGSPFWMAPEVLRDEPYNEKADVFSYGIILCEIIARIQADPDYLPRTENFGLDYDAFQNMVGDCPSDFLQLTFNCCNMDPKLRPSFEEIGKTLKEIMSRLPEEELERDRKLQPTAKGPLEKVPGGKRLSSLDDKIPHKSPRPRRTIWLSRSQSDIFSHKPPRTVSVLDPYYQPRDGATHTPKVNPFSARQDLKGGKVKFFDLPSKSVISLVFDLDAPGPGSTTLADCQEPLAMSSRRWRSLPGSPEFLHQACPFMGCEESLSDGPPPRLSSLKYGVREIPPFRTSALSAASGHEAMDCSNPQEENGFGPRLKGTSLCTGAASEEMEVEEERPRRASVYFSISGISLQTQAKQDG</sequence>
<reference key="1">
    <citation type="journal article" date="2004" name="Genome Res.">
        <title>The status, quality, and expansion of the NIH full-length cDNA project: the Mammalian Gene Collection (MGC).</title>
        <authorList>
            <consortium name="The MGC Project Team"/>
        </authorList>
    </citation>
    <scope>NUCLEOTIDE SEQUENCE [LARGE SCALE MRNA]</scope>
    <source>
        <tissue>Liver</tissue>
    </source>
</reference>
<reference key="2">
    <citation type="journal article" date="2010" name="Cell">
        <title>A tissue-specific atlas of mouse protein phosphorylation and expression.</title>
        <authorList>
            <person name="Huttlin E.L."/>
            <person name="Jedrychowski M.P."/>
            <person name="Elias J.E."/>
            <person name="Goswami T."/>
            <person name="Rad R."/>
            <person name="Beausoleil S.A."/>
            <person name="Villen J."/>
            <person name="Haas W."/>
            <person name="Sowa M.E."/>
            <person name="Gygi S.P."/>
        </authorList>
    </citation>
    <scope>PHOSPHORYLATION [LARGE SCALE ANALYSIS] AT SER-456 AND SER-460</scope>
    <scope>IDENTIFICATION BY MASS SPECTROMETRY [LARGE SCALE ANALYSIS]</scope>
    <source>
        <tissue>Brain</tissue>
        <tissue>Kidney</tissue>
        <tissue>Liver</tissue>
        <tissue>Testis</tissue>
    </source>
</reference>
<keyword id="KW-0067">ATP-binding</keyword>
<keyword id="KW-0418">Kinase</keyword>
<keyword id="KW-0460">Magnesium</keyword>
<keyword id="KW-0464">Manganese</keyword>
<keyword id="KW-0479">Metal-binding</keyword>
<keyword id="KW-0547">Nucleotide-binding</keyword>
<keyword id="KW-0539">Nucleus</keyword>
<keyword id="KW-0597">Phosphoprotein</keyword>
<keyword id="KW-1185">Reference proteome</keyword>
<keyword id="KW-0723">Serine/threonine-protein kinase</keyword>
<keyword id="KW-0808">Transferase</keyword>
<keyword id="KW-0829">Tyrosine-protein kinase</keyword>
<proteinExistence type="evidence at protein level"/>
<comment type="function">
    <text evidence="1">Dual specificity protein kinase activity catalyzing autophosphorylation and phosphorylation of exogenous substrates on both serine/threonine and tyrosine residues. Phosphorylates cofilin at 'Ser-3'. May play an important role in spermatogenesis (By similarity).</text>
</comment>
<comment type="catalytic activity">
    <reaction>
        <text>L-seryl-[protein] + ATP = O-phospho-L-seryl-[protein] + ADP + H(+)</text>
        <dbReference type="Rhea" id="RHEA:17989"/>
        <dbReference type="Rhea" id="RHEA-COMP:9863"/>
        <dbReference type="Rhea" id="RHEA-COMP:11604"/>
        <dbReference type="ChEBI" id="CHEBI:15378"/>
        <dbReference type="ChEBI" id="CHEBI:29999"/>
        <dbReference type="ChEBI" id="CHEBI:30616"/>
        <dbReference type="ChEBI" id="CHEBI:83421"/>
        <dbReference type="ChEBI" id="CHEBI:456216"/>
        <dbReference type="EC" id="2.7.12.1"/>
    </reaction>
</comment>
<comment type="catalytic activity">
    <reaction>
        <text>L-threonyl-[protein] + ATP = O-phospho-L-threonyl-[protein] + ADP + H(+)</text>
        <dbReference type="Rhea" id="RHEA:46608"/>
        <dbReference type="Rhea" id="RHEA-COMP:11060"/>
        <dbReference type="Rhea" id="RHEA-COMP:11605"/>
        <dbReference type="ChEBI" id="CHEBI:15378"/>
        <dbReference type="ChEBI" id="CHEBI:30013"/>
        <dbReference type="ChEBI" id="CHEBI:30616"/>
        <dbReference type="ChEBI" id="CHEBI:61977"/>
        <dbReference type="ChEBI" id="CHEBI:456216"/>
        <dbReference type="EC" id="2.7.12.1"/>
    </reaction>
</comment>
<comment type="catalytic activity">
    <reaction>
        <text>L-tyrosyl-[protein] + ATP = O-phospho-L-tyrosyl-[protein] + ADP + H(+)</text>
        <dbReference type="Rhea" id="RHEA:10596"/>
        <dbReference type="Rhea" id="RHEA-COMP:10136"/>
        <dbReference type="Rhea" id="RHEA-COMP:20101"/>
        <dbReference type="ChEBI" id="CHEBI:15378"/>
        <dbReference type="ChEBI" id="CHEBI:30616"/>
        <dbReference type="ChEBI" id="CHEBI:46858"/>
        <dbReference type="ChEBI" id="CHEBI:61978"/>
        <dbReference type="ChEBI" id="CHEBI:456216"/>
        <dbReference type="EC" id="2.7.12.1"/>
    </reaction>
</comment>
<comment type="cofactor">
    <cofactor evidence="1">
        <name>Mg(2+)</name>
        <dbReference type="ChEBI" id="CHEBI:18420"/>
    </cofactor>
</comment>
<comment type="cofactor">
    <cofactor evidence="1">
        <name>Mn(2+)</name>
        <dbReference type="ChEBI" id="CHEBI:29035"/>
    </cofactor>
</comment>
<comment type="activity regulation">
    <text evidence="1">Activated by autophosphorylation on Ser-219.</text>
</comment>
<comment type="subcellular location">
    <subcellularLocation>
        <location evidence="1">Nucleus</location>
    </subcellularLocation>
</comment>
<comment type="similarity">
    <text evidence="6">Belongs to the protein kinase superfamily. TKL Ser/Thr protein kinase family.</text>
</comment>
<dbReference type="EC" id="2.7.12.1"/>
<dbReference type="EMBL" id="BC019149">
    <property type="protein sequence ID" value="AAH19149.1"/>
    <property type="molecule type" value="mRNA"/>
</dbReference>
<dbReference type="EMBL" id="BC029766">
    <property type="protein sequence ID" value="AAH29766.1"/>
    <property type="molecule type" value="mRNA"/>
</dbReference>
<dbReference type="CCDS" id="CCDS18516.1"/>
<dbReference type="RefSeq" id="NP_666263.3">
    <property type="nucleotide sequence ID" value="NM_146151.4"/>
</dbReference>
<dbReference type="SMR" id="Q8VCT9"/>
<dbReference type="FunCoup" id="Q8VCT9">
    <property type="interactions" value="2339"/>
</dbReference>
<dbReference type="STRING" id="10090.ENSMUSP00000041009"/>
<dbReference type="iPTMnet" id="Q8VCT9"/>
<dbReference type="PhosphoSitePlus" id="Q8VCT9"/>
<dbReference type="PaxDb" id="10090-ENSMUSP00000041009"/>
<dbReference type="ProteomicsDB" id="263107"/>
<dbReference type="Antibodypedia" id="32628">
    <property type="antibodies" value="320 antibodies from 32 providers"/>
</dbReference>
<dbReference type="DNASU" id="230661"/>
<dbReference type="Ensembl" id="ENSMUST00000045542.13">
    <property type="protein sequence ID" value="ENSMUSP00000041009.7"/>
    <property type="gene ID" value="ENSMUSG00000033985.18"/>
</dbReference>
<dbReference type="GeneID" id="230661"/>
<dbReference type="KEGG" id="mmu:230661"/>
<dbReference type="UCSC" id="uc008uhj.2">
    <property type="organism name" value="mouse"/>
</dbReference>
<dbReference type="AGR" id="MGI:2385204"/>
<dbReference type="CTD" id="10420"/>
<dbReference type="MGI" id="MGI:2385204">
    <property type="gene designation" value="Tesk2"/>
</dbReference>
<dbReference type="VEuPathDB" id="HostDB:ENSMUSG00000033985"/>
<dbReference type="eggNOG" id="ENOG502QTCP">
    <property type="taxonomic scope" value="Eukaryota"/>
</dbReference>
<dbReference type="GeneTree" id="ENSGT00940000158765"/>
<dbReference type="HOGENOM" id="CLU_018577_1_0_1"/>
<dbReference type="InParanoid" id="Q8VCT9"/>
<dbReference type="OMA" id="REAWPFR"/>
<dbReference type="OrthoDB" id="20134at2759"/>
<dbReference type="PhylomeDB" id="Q8VCT9"/>
<dbReference type="TreeFam" id="TF318014"/>
<dbReference type="BioGRID-ORCS" id="230661">
    <property type="hits" value="2 hits in 80 CRISPR screens"/>
</dbReference>
<dbReference type="ChiTaRS" id="Tesk2">
    <property type="organism name" value="mouse"/>
</dbReference>
<dbReference type="PRO" id="PR:Q8VCT9"/>
<dbReference type="Proteomes" id="UP000000589">
    <property type="component" value="Chromosome 4"/>
</dbReference>
<dbReference type="RNAct" id="Q8VCT9">
    <property type="molecule type" value="protein"/>
</dbReference>
<dbReference type="Bgee" id="ENSMUSG00000033985">
    <property type="expression patterns" value="Expressed in granulocyte and 218 other cell types or tissues"/>
</dbReference>
<dbReference type="ExpressionAtlas" id="Q8VCT9">
    <property type="expression patterns" value="baseline and differential"/>
</dbReference>
<dbReference type="GO" id="GO:0016604">
    <property type="term" value="C:nuclear body"/>
    <property type="evidence" value="ECO:0007669"/>
    <property type="project" value="Ensembl"/>
</dbReference>
<dbReference type="GO" id="GO:0005634">
    <property type="term" value="C:nucleus"/>
    <property type="evidence" value="ECO:0000250"/>
    <property type="project" value="UniProtKB"/>
</dbReference>
<dbReference type="GO" id="GO:0005524">
    <property type="term" value="F:ATP binding"/>
    <property type="evidence" value="ECO:0007669"/>
    <property type="project" value="UniProtKB-KW"/>
</dbReference>
<dbReference type="GO" id="GO:0046872">
    <property type="term" value="F:metal ion binding"/>
    <property type="evidence" value="ECO:0007669"/>
    <property type="project" value="UniProtKB-KW"/>
</dbReference>
<dbReference type="GO" id="GO:0106310">
    <property type="term" value="F:protein serine kinase activity"/>
    <property type="evidence" value="ECO:0007669"/>
    <property type="project" value="RHEA"/>
</dbReference>
<dbReference type="GO" id="GO:0004674">
    <property type="term" value="F:protein serine/threonine kinase activity"/>
    <property type="evidence" value="ECO:0000250"/>
    <property type="project" value="UniProtKB"/>
</dbReference>
<dbReference type="GO" id="GO:0004712">
    <property type="term" value="F:protein serine/threonine/tyrosine kinase activity"/>
    <property type="evidence" value="ECO:0007669"/>
    <property type="project" value="UniProtKB-EC"/>
</dbReference>
<dbReference type="GO" id="GO:0004713">
    <property type="term" value="F:protein tyrosine kinase activity"/>
    <property type="evidence" value="ECO:0007669"/>
    <property type="project" value="UniProtKB-KW"/>
</dbReference>
<dbReference type="GO" id="GO:0030036">
    <property type="term" value="P:actin cytoskeleton organization"/>
    <property type="evidence" value="ECO:0000250"/>
    <property type="project" value="UniProtKB"/>
</dbReference>
<dbReference type="GO" id="GO:0048041">
    <property type="term" value="P:focal adhesion assembly"/>
    <property type="evidence" value="ECO:0000250"/>
    <property type="project" value="UniProtKB"/>
</dbReference>
<dbReference type="GO" id="GO:0006468">
    <property type="term" value="P:protein phosphorylation"/>
    <property type="evidence" value="ECO:0000250"/>
    <property type="project" value="UniProtKB"/>
</dbReference>
<dbReference type="GO" id="GO:0007283">
    <property type="term" value="P:spermatogenesis"/>
    <property type="evidence" value="ECO:0000250"/>
    <property type="project" value="UniProtKB"/>
</dbReference>
<dbReference type="CDD" id="cd14155">
    <property type="entry name" value="PKc_TESK"/>
    <property type="match status" value="1"/>
</dbReference>
<dbReference type="FunFam" id="1.10.510.10:FF:000202">
    <property type="entry name" value="Dual specificity testis-specific protein kinase 2"/>
    <property type="match status" value="1"/>
</dbReference>
<dbReference type="FunFam" id="3.30.200.20:FF:000134">
    <property type="entry name" value="Dual specificity testis-specific protein kinase 2"/>
    <property type="match status" value="1"/>
</dbReference>
<dbReference type="Gene3D" id="3.30.200.20">
    <property type="entry name" value="Phosphorylase Kinase, domain 1"/>
    <property type="match status" value="1"/>
</dbReference>
<dbReference type="Gene3D" id="1.10.510.10">
    <property type="entry name" value="Transferase(Phosphotransferase) domain 1"/>
    <property type="match status" value="1"/>
</dbReference>
<dbReference type="InterPro" id="IPR050940">
    <property type="entry name" value="Actin_reg-Ser/Thr_kinase"/>
</dbReference>
<dbReference type="InterPro" id="IPR011009">
    <property type="entry name" value="Kinase-like_dom_sf"/>
</dbReference>
<dbReference type="InterPro" id="IPR000719">
    <property type="entry name" value="Prot_kinase_dom"/>
</dbReference>
<dbReference type="InterPro" id="IPR017441">
    <property type="entry name" value="Protein_kinase_ATP_BS"/>
</dbReference>
<dbReference type="InterPro" id="IPR001245">
    <property type="entry name" value="Ser-Thr/Tyr_kinase_cat_dom"/>
</dbReference>
<dbReference type="InterPro" id="IPR008266">
    <property type="entry name" value="Tyr_kinase_AS"/>
</dbReference>
<dbReference type="PANTHER" id="PTHR46485:SF6">
    <property type="entry name" value="DUAL SPECIFICITY TESTIS-SPECIFIC PROTEIN KINASE 2"/>
    <property type="match status" value="1"/>
</dbReference>
<dbReference type="PANTHER" id="PTHR46485">
    <property type="entry name" value="LIM DOMAIN KINASE 1"/>
    <property type="match status" value="1"/>
</dbReference>
<dbReference type="Pfam" id="PF07714">
    <property type="entry name" value="PK_Tyr_Ser-Thr"/>
    <property type="match status" value="1"/>
</dbReference>
<dbReference type="PRINTS" id="PR00109">
    <property type="entry name" value="TYRKINASE"/>
</dbReference>
<dbReference type="SUPFAM" id="SSF56112">
    <property type="entry name" value="Protein kinase-like (PK-like)"/>
    <property type="match status" value="1"/>
</dbReference>
<dbReference type="PROSITE" id="PS00107">
    <property type="entry name" value="PROTEIN_KINASE_ATP"/>
    <property type="match status" value="1"/>
</dbReference>
<dbReference type="PROSITE" id="PS50011">
    <property type="entry name" value="PROTEIN_KINASE_DOM"/>
    <property type="match status" value="1"/>
</dbReference>
<dbReference type="PROSITE" id="PS00109">
    <property type="entry name" value="PROTEIN_KINASE_TYR"/>
    <property type="match status" value="1"/>
</dbReference>
<protein>
    <recommendedName>
        <fullName>Dual specificity testis-specific protein kinase 2</fullName>
        <ecNumber>2.7.12.1</ecNumber>
    </recommendedName>
    <alternativeName>
        <fullName>Testicular protein kinase 2</fullName>
    </alternativeName>
</protein>
<accession>Q8VCT9</accession>
<evidence type="ECO:0000250" key="1"/>
<evidence type="ECO:0000250" key="2">
    <source>
        <dbReference type="UniProtKB" id="Q96S53"/>
    </source>
</evidence>
<evidence type="ECO:0000255" key="3">
    <source>
        <dbReference type="PROSITE-ProRule" id="PRU00159"/>
    </source>
</evidence>
<evidence type="ECO:0000255" key="4">
    <source>
        <dbReference type="PROSITE-ProRule" id="PRU10028"/>
    </source>
</evidence>
<evidence type="ECO:0000256" key="5">
    <source>
        <dbReference type="SAM" id="MobiDB-lite"/>
    </source>
</evidence>
<evidence type="ECO:0000305" key="6"/>
<evidence type="ECO:0007744" key="7">
    <source>
    </source>
</evidence>
<gene>
    <name type="primary">Tesk2</name>
</gene>
<name>TESK2_MOUSE</name>
<feature type="chain" id="PRO_0000086750" description="Dual specificity testis-specific protein kinase 2">
    <location>
        <begin position="1"/>
        <end position="570"/>
    </location>
</feature>
<feature type="domain" description="Protein kinase" evidence="3">
    <location>
        <begin position="58"/>
        <end position="313"/>
    </location>
</feature>
<feature type="region of interest" description="Disordered" evidence="5">
    <location>
        <begin position="316"/>
        <end position="357"/>
    </location>
</feature>
<feature type="region of interest" description="Disordered" evidence="5">
    <location>
        <begin position="511"/>
        <end position="530"/>
    </location>
</feature>
<feature type="compositionally biased region" description="Basic and acidic residues" evidence="5">
    <location>
        <begin position="316"/>
        <end position="327"/>
    </location>
</feature>
<feature type="active site" description="Proton acceptor" evidence="3 4">
    <location>
        <position position="176"/>
    </location>
</feature>
<feature type="binding site" evidence="3">
    <location>
        <begin position="64"/>
        <end position="72"/>
    </location>
    <ligand>
        <name>ATP</name>
        <dbReference type="ChEBI" id="CHEBI:30616"/>
    </ligand>
</feature>
<feature type="binding site" evidence="3">
    <location>
        <position position="87"/>
    </location>
    <ligand>
        <name>ATP</name>
        <dbReference type="ChEBI" id="CHEBI:30616"/>
    </ligand>
</feature>
<feature type="modified residue" description="Phosphoserine; by autocatalysis" evidence="1">
    <location>
        <position position="219"/>
    </location>
</feature>
<feature type="modified residue" description="Phosphoserine" evidence="2">
    <location>
        <position position="369"/>
    </location>
</feature>
<feature type="modified residue" description="Phosphoserine" evidence="7">
    <location>
        <position position="456"/>
    </location>
</feature>
<feature type="modified residue" description="Phosphoserine" evidence="7">
    <location>
        <position position="460"/>
    </location>
</feature>
<organism>
    <name type="scientific">Mus musculus</name>
    <name type="common">Mouse</name>
    <dbReference type="NCBI Taxonomy" id="10090"/>
    <lineage>
        <taxon>Eukaryota</taxon>
        <taxon>Metazoa</taxon>
        <taxon>Chordata</taxon>
        <taxon>Craniata</taxon>
        <taxon>Vertebrata</taxon>
        <taxon>Euteleostomi</taxon>
        <taxon>Mammalia</taxon>
        <taxon>Eutheria</taxon>
        <taxon>Euarchontoglires</taxon>
        <taxon>Glires</taxon>
        <taxon>Rodentia</taxon>
        <taxon>Myomorpha</taxon>
        <taxon>Muroidea</taxon>
        <taxon>Muridae</taxon>
        <taxon>Murinae</taxon>
        <taxon>Mus</taxon>
        <taxon>Mus</taxon>
    </lineage>
</organism>